<name>TRDV1_HUMAN</name>
<organism>
    <name type="scientific">Homo sapiens</name>
    <name type="common">Human</name>
    <dbReference type="NCBI Taxonomy" id="9606"/>
    <lineage>
        <taxon>Eukaryota</taxon>
        <taxon>Metazoa</taxon>
        <taxon>Chordata</taxon>
        <taxon>Craniata</taxon>
        <taxon>Vertebrata</taxon>
        <taxon>Euteleostomi</taxon>
        <taxon>Mammalia</taxon>
        <taxon>Eutheria</taxon>
        <taxon>Euarchontoglires</taxon>
        <taxon>Primates</taxon>
        <taxon>Haplorrhini</taxon>
        <taxon>Catarrhini</taxon>
        <taxon>Hominidae</taxon>
        <taxon>Homo</taxon>
    </lineage>
</organism>
<reference key="1">
    <citation type="journal article" date="2003" name="Nature">
        <title>The DNA sequence and analysis of human chromosome 14.</title>
        <authorList>
            <person name="Heilig R."/>
            <person name="Eckenberg R."/>
            <person name="Petit J.-L."/>
            <person name="Fonknechten N."/>
            <person name="Da Silva C."/>
            <person name="Cattolico L."/>
            <person name="Levy M."/>
            <person name="Barbe V."/>
            <person name="De Berardinis V."/>
            <person name="Ureta-Vidal A."/>
            <person name="Pelletier E."/>
            <person name="Vico V."/>
            <person name="Anthouard V."/>
            <person name="Rowen L."/>
            <person name="Madan A."/>
            <person name="Qin S."/>
            <person name="Sun H."/>
            <person name="Du H."/>
            <person name="Pepin K."/>
            <person name="Artiguenave F."/>
            <person name="Robert C."/>
            <person name="Cruaud C."/>
            <person name="Bruels T."/>
            <person name="Jaillon O."/>
            <person name="Friedlander L."/>
            <person name="Samson G."/>
            <person name="Brottier P."/>
            <person name="Cure S."/>
            <person name="Segurens B."/>
            <person name="Aniere F."/>
            <person name="Samain S."/>
            <person name="Crespeau H."/>
            <person name="Abbasi N."/>
            <person name="Aiach N."/>
            <person name="Boscus D."/>
            <person name="Dickhoff R."/>
            <person name="Dors M."/>
            <person name="Dubois I."/>
            <person name="Friedman C."/>
            <person name="Gouyvenoux M."/>
            <person name="James R."/>
            <person name="Madan A."/>
            <person name="Mairey-Estrada B."/>
            <person name="Mangenot S."/>
            <person name="Martins N."/>
            <person name="Menard M."/>
            <person name="Oztas S."/>
            <person name="Ratcliffe A."/>
            <person name="Shaffer T."/>
            <person name="Trask B."/>
            <person name="Vacherie B."/>
            <person name="Bellemere C."/>
            <person name="Belser C."/>
            <person name="Besnard-Gonnet M."/>
            <person name="Bartol-Mavel D."/>
            <person name="Boutard M."/>
            <person name="Briez-Silla S."/>
            <person name="Combette S."/>
            <person name="Dufosse-Laurent V."/>
            <person name="Ferron C."/>
            <person name="Lechaplais C."/>
            <person name="Louesse C."/>
            <person name="Muselet D."/>
            <person name="Magdelenat G."/>
            <person name="Pateau E."/>
            <person name="Petit E."/>
            <person name="Sirvain-Trukniewicz P."/>
            <person name="Trybou A."/>
            <person name="Vega-Czarny N."/>
            <person name="Bataille E."/>
            <person name="Bluet E."/>
            <person name="Bordelais I."/>
            <person name="Dubois M."/>
            <person name="Dumont C."/>
            <person name="Guerin T."/>
            <person name="Haffray S."/>
            <person name="Hammadi R."/>
            <person name="Muanga J."/>
            <person name="Pellouin V."/>
            <person name="Robert D."/>
            <person name="Wunderle E."/>
            <person name="Gauguet G."/>
            <person name="Roy A."/>
            <person name="Sainte-Marthe L."/>
            <person name="Verdier J."/>
            <person name="Verdier-Discala C."/>
            <person name="Hillier L.W."/>
            <person name="Fulton L."/>
            <person name="McPherson J."/>
            <person name="Matsuda F."/>
            <person name="Wilson R."/>
            <person name="Scarpelli C."/>
            <person name="Gyapay G."/>
            <person name="Wincker P."/>
            <person name="Saurin W."/>
            <person name="Quetier F."/>
            <person name="Waterston R."/>
            <person name="Hood L."/>
            <person name="Weissenbach J."/>
        </authorList>
    </citation>
    <scope>NUCLEOTIDE SEQUENCE [LARGE SCALE GENOMIC DNA] (IMGT ALLELE TRDV1*01)</scope>
</reference>
<reference key="2">
    <citation type="book" date="2001" name="The T Cell Receptor FactsBook.">
        <title>The T Cell Receptor FactsBook.</title>
        <editorList>
            <person name="Lefranc M.P."/>
            <person name="Lefranc G."/>
        </editorList>
        <authorList>
            <person name="Lefranc M.P."/>
            <person name="Lefranc G."/>
        </authorList>
    </citation>
    <scope>NOMENCLATURE</scope>
</reference>
<reference key="3">
    <citation type="journal article" date="2013" name="Nat. Rev. Immunol.">
        <title>Six-of-the-best: unique contributions of gammadelta T cells to immunology.</title>
        <authorList>
            <person name="Vantourout P."/>
            <person name="Hayday A."/>
        </authorList>
    </citation>
    <scope>REVIEW ON FUNCTION AND ANTIGEN RECOGNITION</scope>
</reference>
<reference key="4">
    <citation type="journal article" date="2014" name="Annu. Rev. Immunol.">
        <title>gammadelta T cells: first line of defense and beyond.</title>
        <authorList>
            <person name="Chien Y.H."/>
            <person name="Meyer C."/>
            <person name="Bonneville M."/>
        </authorList>
    </citation>
    <scope>REVIEW ON GAMMA DELTA T CELL RECEPTOR DIVERSITY</scope>
</reference>
<reference key="5">
    <citation type="journal article" date="2014" name="Front. Immunol.">
        <title>Immunoglobulin and T Cell Receptor Genes: IMGT((R)) and the Birth and Rise of Immunoinformatics.</title>
        <authorList>
            <person name="Lefranc M.P."/>
        </authorList>
    </citation>
    <scope>NOMENCLATURE</scope>
</reference>
<reference key="6">
    <citation type="journal article" date="2015" name="Front. Immunol.">
        <title>Five Layers of Receptor Signaling in gammadelta T-Cell Differentiation and Activation.</title>
        <authorList>
            <person name="Ribeiro S.T."/>
            <person name="Ribot J.C."/>
            <person name="Silva-Santos B."/>
        </authorList>
    </citation>
    <scope>REVIEW ON T CELL RECEPTOR SIGNALING</scope>
    <scope>SUBUNIT</scope>
</reference>
<reference key="7">
    <citation type="journal article" date="2017" name="Nat. Rev. Immunol.">
        <title>gammadelta T cells in homeostasis and host defence of epithelial barrier tissues.</title>
        <authorList>
            <person name="Nielsen M.M."/>
            <person name="Witherden D.A."/>
            <person name="Havran W.L."/>
        </authorList>
    </citation>
    <scope>REVIEW ON FUNCTION</scope>
</reference>
<dbReference type="EMBL" id="AC245505">
    <property type="status" value="NOT_ANNOTATED_CDS"/>
    <property type="molecule type" value="Genomic_DNA"/>
</dbReference>
<dbReference type="PDB" id="7RYL">
    <property type="method" value="X-ray"/>
    <property type="resolution" value="2.00 A"/>
    <property type="chains" value="D=20-115"/>
</dbReference>
<dbReference type="PDB" id="7RYM">
    <property type="method" value="X-ray"/>
    <property type="resolution" value="3.20 A"/>
    <property type="chains" value="D=20-115"/>
</dbReference>
<dbReference type="PDB" id="7RYN">
    <property type="method" value="X-ray"/>
    <property type="resolution" value="2.70 A"/>
    <property type="chains" value="D=20-115"/>
</dbReference>
<dbReference type="PDB" id="7RYO">
    <property type="method" value="X-ray"/>
    <property type="resolution" value="3.00 A"/>
    <property type="chains" value="D=20-115"/>
</dbReference>
<dbReference type="PDB" id="8JBV">
    <property type="method" value="EM"/>
    <property type="resolution" value="3.02 A"/>
    <property type="chains" value="M/m=21-114"/>
</dbReference>
<dbReference type="PDB" id="8JCB">
    <property type="method" value="EM"/>
    <property type="resolution" value="9.50 A"/>
    <property type="chains" value="M/m=21-114"/>
</dbReference>
<dbReference type="PDB" id="8WXE">
    <property type="method" value="EM"/>
    <property type="resolution" value="4.00 A"/>
    <property type="chains" value="m=16-114"/>
</dbReference>
<dbReference type="PDBsum" id="7RYL"/>
<dbReference type="PDBsum" id="7RYM"/>
<dbReference type="PDBsum" id="7RYN"/>
<dbReference type="PDBsum" id="7RYO"/>
<dbReference type="PDBsum" id="8JBV"/>
<dbReference type="PDBsum" id="8JCB"/>
<dbReference type="PDBsum" id="8WXE"/>
<dbReference type="SMR" id="A0A1B0GX56"/>
<dbReference type="FunCoup" id="A0A1B0GX56">
    <property type="interactions" value="300"/>
</dbReference>
<dbReference type="STRING" id="9606.ENSP00000484940"/>
<dbReference type="IMGT_GENE-DB" id="TRDV1"/>
<dbReference type="BioMuta" id="TRDV1"/>
<dbReference type="MassIVE" id="A0A1B0GX56"/>
<dbReference type="Ensembl" id="ENST00000390452.2">
    <property type="protein sequence ID" value="ENSP00000452111.1"/>
    <property type="gene ID" value="ENSG00000211804.4"/>
</dbReference>
<dbReference type="AGR" id="HGNC:12262"/>
<dbReference type="GeneCards" id="TRDV1"/>
<dbReference type="HGNC" id="HGNC:12262">
    <property type="gene designation" value="TRDV1"/>
</dbReference>
<dbReference type="HPA" id="ENSG00000211804">
    <property type="expression patterns" value="Tissue enriched (lymphoid)"/>
</dbReference>
<dbReference type="neXtProt" id="NX_A0A1B0GX56"/>
<dbReference type="VEuPathDB" id="HostDB:ENSG00000211804"/>
<dbReference type="GeneTree" id="ENSGT00940000161790"/>
<dbReference type="InParanoid" id="A0A1B0GX56"/>
<dbReference type="OrthoDB" id="9535264at2759"/>
<dbReference type="PAN-GO" id="A0A1B0GX56">
    <property type="GO annotations" value="3 GO annotations based on evolutionary models"/>
</dbReference>
<dbReference type="ChiTaRS" id="TRDV1">
    <property type="organism name" value="human"/>
</dbReference>
<dbReference type="Pharos" id="A0A1B0GX56">
    <property type="development level" value="Tdark"/>
</dbReference>
<dbReference type="PRO" id="PR:A0A1B0GX56"/>
<dbReference type="Proteomes" id="UP000005640">
    <property type="component" value="Chromosome 14"/>
</dbReference>
<dbReference type="RNAct" id="A0A1B0GX56">
    <property type="molecule type" value="protein"/>
</dbReference>
<dbReference type="Bgee" id="ENSG00000211804">
    <property type="expression patterns" value="Expressed in lymph node and 79 other cell types or tissues"/>
</dbReference>
<dbReference type="GO" id="GO:0019814">
    <property type="term" value="C:immunoglobulin complex"/>
    <property type="evidence" value="ECO:0000318"/>
    <property type="project" value="GO_Central"/>
</dbReference>
<dbReference type="GO" id="GO:0042101">
    <property type="term" value="C:T cell receptor complex"/>
    <property type="evidence" value="ECO:0007669"/>
    <property type="project" value="UniProtKB-KW"/>
</dbReference>
<dbReference type="GO" id="GO:0002250">
    <property type="term" value="P:adaptive immune response"/>
    <property type="evidence" value="ECO:0007669"/>
    <property type="project" value="UniProtKB-KW"/>
</dbReference>
<dbReference type="GO" id="GO:0006955">
    <property type="term" value="P:immune response"/>
    <property type="evidence" value="ECO:0000318"/>
    <property type="project" value="GO_Central"/>
</dbReference>
<dbReference type="GO" id="GO:0045087">
    <property type="term" value="P:innate immune response"/>
    <property type="evidence" value="ECO:0007669"/>
    <property type="project" value="UniProtKB-KW"/>
</dbReference>
<dbReference type="FunFam" id="2.60.40.10:FF:000878">
    <property type="entry name" value="T cell receptor alpha variable 38-1"/>
    <property type="match status" value="1"/>
</dbReference>
<dbReference type="Gene3D" id="2.60.40.10">
    <property type="entry name" value="Immunoglobulins"/>
    <property type="match status" value="1"/>
</dbReference>
<dbReference type="InterPro" id="IPR007110">
    <property type="entry name" value="Ig-like_dom"/>
</dbReference>
<dbReference type="InterPro" id="IPR036179">
    <property type="entry name" value="Ig-like_dom_sf"/>
</dbReference>
<dbReference type="InterPro" id="IPR013783">
    <property type="entry name" value="Ig-like_fold"/>
</dbReference>
<dbReference type="InterPro" id="IPR013106">
    <property type="entry name" value="Ig_V-set"/>
</dbReference>
<dbReference type="InterPro" id="IPR051287">
    <property type="entry name" value="TCR_variable_region"/>
</dbReference>
<dbReference type="PANTHER" id="PTHR19367:SF45">
    <property type="entry name" value="IG-LIKE DOMAIN-CONTAINING PROTEIN"/>
    <property type="match status" value="1"/>
</dbReference>
<dbReference type="PANTHER" id="PTHR19367">
    <property type="entry name" value="T-CELL RECEPTOR ALPHA CHAIN V REGION"/>
    <property type="match status" value="1"/>
</dbReference>
<dbReference type="Pfam" id="PF07686">
    <property type="entry name" value="V-set"/>
    <property type="match status" value="1"/>
</dbReference>
<dbReference type="SMART" id="SM00406">
    <property type="entry name" value="IGv"/>
    <property type="match status" value="1"/>
</dbReference>
<dbReference type="SUPFAM" id="SSF48726">
    <property type="entry name" value="Immunoglobulin"/>
    <property type="match status" value="1"/>
</dbReference>
<dbReference type="PROSITE" id="PS50835">
    <property type="entry name" value="IG_LIKE"/>
    <property type="match status" value="1"/>
</dbReference>
<comment type="function">
    <text evidence="3 4 5 6 7">V region of the variable domain of T cell receptor (TR) delta chain that participates in the antigen recognition (PubMed:24600447). Gamma-delta TRs recognize a variety of self and foreign non-peptide antigens frequently expressed at the epithelial boundaries between the host and external environment, including endogenous lipids presented by MH-like protein CD1D and phosphoantigens presented by butyrophilin-like molecule BTN3A1. Upon antigen recognition induces rapid, innate-like immune responses involved in pathogen clearance and tissue repair (PubMed:23348415, PubMed:28920588). Binding of gamma-delta TR complex to antigen triggers phosphorylation of immunoreceptor tyrosine-based activation motifs (ITAMs) in the CD3 chains by the LCK and FYN kinases, allowing the recruitment, phosphorylation, and activation of ZAP70 that facilitates phosphorylation of the scaffolding proteins LCP2 and LAT. This lead to the formation of a supramolecular signalosome that recruits the phospholipase PLCG1, resulting in calcium mobilization and ERK activation, ultimately leading to T cell expansion and differentiation into effector cells (PubMed:25674089). Gamma-delta TRs are produced through somatic rearrangement of a limited repertoire of variable (V), diversity (D), and joining (J) genes. The potential diversity of gamma-delta TRs is conferred by the unique ability to rearrange (D) genes in tandem and to utilize all three reading frames. The combinatorial diversity is considerably increased by the sequence exonuclease trimming and random nucleotide (N) region additions which occur during the V-(D)-J rearrangements (PubMed:24387714).</text>
</comment>
<comment type="subunit">
    <text evidence="6">Gamma-delta TR is a heterodimer composed of a gamma and delta chain; disulfide-linked. The gamma-delta TR is associated with the transmembrane signaling CD3 coreceptor proteins following the stoichiometry: a single gamma-delta TR heterodimer associates with one CD3D-CD3E heterodimer, one CD3G-CD3E heterodimer and one CD247 homodimer forming a stable octameric structure. Upon activation, gamma-delta TR complex associates with FCER1G to initiate intracellular signaling.</text>
</comment>
<comment type="subcellular location">
    <subcellularLocation>
        <location evidence="9">Cell membrane</location>
    </subcellularLocation>
</comment>
<comment type="polymorphism">
    <text evidence="9">There are several alleles. The sequence shown is that of IMGT allele TRDV1*01.</text>
</comment>
<feature type="signal peptide" evidence="1">
    <location>
        <begin position="1"/>
        <end position="21"/>
    </location>
</feature>
<feature type="chain" id="PRO_5008408769" description="T cell receptor delta variable 1" evidence="1">
    <location>
        <begin position="22"/>
        <end position="115"/>
    </location>
</feature>
<feature type="domain" description="Ig-like" evidence="2">
    <location>
        <begin position="22"/>
        <end position="115" status="greater than"/>
    </location>
</feature>
<feature type="disulfide bond" evidence="2">
    <location>
        <begin position="43"/>
        <end position="111"/>
    </location>
</feature>
<feature type="non-terminal residue">
    <location>
        <position position="115"/>
    </location>
</feature>
<feature type="strand" evidence="10">
    <location>
        <begin position="23"/>
        <end position="25"/>
    </location>
</feature>
<feature type="strand" evidence="10">
    <location>
        <begin position="30"/>
        <end position="34"/>
    </location>
</feature>
<feature type="strand" evidence="11">
    <location>
        <begin position="35"/>
        <end position="37"/>
    </location>
</feature>
<feature type="strand" evidence="10">
    <location>
        <begin position="39"/>
        <end position="41"/>
    </location>
</feature>
<feature type="strand" evidence="10">
    <location>
        <begin position="44"/>
        <end position="46"/>
    </location>
</feature>
<feature type="strand" evidence="10">
    <location>
        <begin position="50"/>
        <end position="60"/>
    </location>
</feature>
<feature type="turn" evidence="10">
    <location>
        <begin position="61"/>
        <end position="63"/>
    </location>
</feature>
<feature type="strand" evidence="10">
    <location>
        <begin position="64"/>
        <end position="72"/>
    </location>
</feature>
<feature type="strand" evidence="10">
    <location>
        <begin position="83"/>
        <end position="88"/>
    </location>
</feature>
<feature type="turn" evidence="10">
    <location>
        <begin position="89"/>
        <end position="92"/>
    </location>
</feature>
<feature type="strand" evidence="10">
    <location>
        <begin position="93"/>
        <end position="98"/>
    </location>
</feature>
<feature type="helix" evidence="10">
    <location>
        <begin position="103"/>
        <end position="105"/>
    </location>
</feature>
<feature type="strand" evidence="10">
    <location>
        <begin position="107"/>
        <end position="115"/>
    </location>
</feature>
<proteinExistence type="evidence at protein level"/>
<evidence type="ECO:0000255" key="1"/>
<evidence type="ECO:0000255" key="2">
    <source>
        <dbReference type="PROSITE-ProRule" id="PRU00114"/>
    </source>
</evidence>
<evidence type="ECO:0000303" key="3">
    <source>
    </source>
</evidence>
<evidence type="ECO:0000303" key="4">
    <source>
    </source>
</evidence>
<evidence type="ECO:0000303" key="5">
    <source>
    </source>
</evidence>
<evidence type="ECO:0000303" key="6">
    <source>
    </source>
</evidence>
<evidence type="ECO:0000303" key="7">
    <source>
    </source>
</evidence>
<evidence type="ECO:0000303" key="8">
    <source ref="2"/>
</evidence>
<evidence type="ECO:0000305" key="9"/>
<evidence type="ECO:0007829" key="10">
    <source>
        <dbReference type="PDB" id="7RYL"/>
    </source>
</evidence>
<evidence type="ECO:0007829" key="11">
    <source>
        <dbReference type="PDB" id="7RYM"/>
    </source>
</evidence>
<keyword id="KW-0002">3D-structure</keyword>
<keyword id="KW-1064">Adaptive immunity</keyword>
<keyword id="KW-1003">Cell membrane</keyword>
<keyword id="KW-1015">Disulfide bond</keyword>
<keyword id="KW-0391">Immunity</keyword>
<keyword id="KW-0393">Immunoglobulin domain</keyword>
<keyword id="KW-0399">Innate immunity</keyword>
<keyword id="KW-0472">Membrane</keyword>
<keyword id="KW-0675">Receptor</keyword>
<keyword id="KW-1185">Reference proteome</keyword>
<keyword id="KW-0732">Signal</keyword>
<keyword id="KW-1279">T cell receptor</keyword>
<accession>A0A1B0GX56</accession>
<gene>
    <name evidence="8" type="primary">TRDV1</name>
</gene>
<sequence length="115" mass="12955">MLFSSLLCVFVAFSYSGSSVAQKVTQAQSSVSMPVRKAVTLNCLYETSWWSYYIFWYKQLPSKEMIFLIRQGSDEQNAKSGRYSVNFKKAAKSVALTISALQLEDSAKYFCALGE</sequence>
<protein>
    <recommendedName>
        <fullName evidence="8">T cell receptor delta variable 1</fullName>
    </recommendedName>
</protein>